<evidence type="ECO:0000255" key="1">
    <source>
        <dbReference type="HAMAP-Rule" id="MF_00518"/>
    </source>
</evidence>
<comment type="function">
    <text evidence="1">An aminoacyl-tRNA editing enzyme that deacylates mischarged D-aminoacyl-tRNAs. Also deacylates mischarged glycyl-tRNA(Ala), protecting cells against glycine mischarging by AlaRS. Acts via tRNA-based rather than protein-based catalysis; rejects L-amino acids rather than detecting D-amino acids in the active site. By recycling D-aminoacyl-tRNA to D-amino acids and free tRNA molecules, this enzyme counteracts the toxicity associated with the formation of D-aminoacyl-tRNA entities in vivo and helps enforce protein L-homochirality.</text>
</comment>
<comment type="catalytic activity">
    <reaction evidence="1">
        <text>glycyl-tRNA(Ala) + H2O = tRNA(Ala) + glycine + H(+)</text>
        <dbReference type="Rhea" id="RHEA:53744"/>
        <dbReference type="Rhea" id="RHEA-COMP:9657"/>
        <dbReference type="Rhea" id="RHEA-COMP:13640"/>
        <dbReference type="ChEBI" id="CHEBI:15377"/>
        <dbReference type="ChEBI" id="CHEBI:15378"/>
        <dbReference type="ChEBI" id="CHEBI:57305"/>
        <dbReference type="ChEBI" id="CHEBI:78442"/>
        <dbReference type="ChEBI" id="CHEBI:78522"/>
        <dbReference type="EC" id="3.1.1.96"/>
    </reaction>
</comment>
<comment type="catalytic activity">
    <reaction evidence="1">
        <text>a D-aminoacyl-tRNA + H2O = a tRNA + a D-alpha-amino acid + H(+)</text>
        <dbReference type="Rhea" id="RHEA:13953"/>
        <dbReference type="Rhea" id="RHEA-COMP:10123"/>
        <dbReference type="Rhea" id="RHEA-COMP:10124"/>
        <dbReference type="ChEBI" id="CHEBI:15377"/>
        <dbReference type="ChEBI" id="CHEBI:15378"/>
        <dbReference type="ChEBI" id="CHEBI:59871"/>
        <dbReference type="ChEBI" id="CHEBI:78442"/>
        <dbReference type="ChEBI" id="CHEBI:79333"/>
        <dbReference type="EC" id="3.1.1.96"/>
    </reaction>
</comment>
<comment type="subunit">
    <text evidence="1">Homodimer.</text>
</comment>
<comment type="subcellular location">
    <subcellularLocation>
        <location evidence="1">Cytoplasm</location>
    </subcellularLocation>
</comment>
<comment type="domain">
    <text evidence="1">A Gly-cisPro motif from one monomer fits into the active site of the other monomer to allow specific chiral rejection of L-amino acids.</text>
</comment>
<comment type="similarity">
    <text evidence="1">Belongs to the DTD family.</text>
</comment>
<gene>
    <name evidence="1" type="primary">dtd</name>
    <name type="ordered locus">EFER_3892</name>
</gene>
<proteinExistence type="inferred from homology"/>
<dbReference type="EC" id="3.1.1.96" evidence="1"/>
<dbReference type="EMBL" id="CU928158">
    <property type="protein sequence ID" value="CAQ91326.1"/>
    <property type="molecule type" value="Genomic_DNA"/>
</dbReference>
<dbReference type="RefSeq" id="WP_000560983.1">
    <property type="nucleotide sequence ID" value="NC_011740.1"/>
</dbReference>
<dbReference type="SMR" id="B7LVG2"/>
<dbReference type="GeneID" id="93778051"/>
<dbReference type="KEGG" id="efe:EFER_3892"/>
<dbReference type="HOGENOM" id="CLU_076901_1_0_6"/>
<dbReference type="OrthoDB" id="9801395at2"/>
<dbReference type="Proteomes" id="UP000000745">
    <property type="component" value="Chromosome"/>
</dbReference>
<dbReference type="GO" id="GO:0005737">
    <property type="term" value="C:cytoplasm"/>
    <property type="evidence" value="ECO:0007669"/>
    <property type="project" value="UniProtKB-SubCell"/>
</dbReference>
<dbReference type="GO" id="GO:0051500">
    <property type="term" value="F:D-tyrosyl-tRNA(Tyr) deacylase activity"/>
    <property type="evidence" value="ECO:0007669"/>
    <property type="project" value="TreeGrafter"/>
</dbReference>
<dbReference type="GO" id="GO:0106026">
    <property type="term" value="F:Gly-tRNA(Ala) deacylase activity"/>
    <property type="evidence" value="ECO:0007669"/>
    <property type="project" value="UniProtKB-UniRule"/>
</dbReference>
<dbReference type="GO" id="GO:0043908">
    <property type="term" value="F:Ser(Gly)-tRNA(Ala) hydrolase activity"/>
    <property type="evidence" value="ECO:0007669"/>
    <property type="project" value="UniProtKB-UniRule"/>
</dbReference>
<dbReference type="GO" id="GO:0000049">
    <property type="term" value="F:tRNA binding"/>
    <property type="evidence" value="ECO:0007669"/>
    <property type="project" value="UniProtKB-UniRule"/>
</dbReference>
<dbReference type="GO" id="GO:0019478">
    <property type="term" value="P:D-amino acid catabolic process"/>
    <property type="evidence" value="ECO:0007669"/>
    <property type="project" value="UniProtKB-UniRule"/>
</dbReference>
<dbReference type="CDD" id="cd00563">
    <property type="entry name" value="Dtyr_deacylase"/>
    <property type="match status" value="1"/>
</dbReference>
<dbReference type="FunFam" id="3.50.80.10:FF:000001">
    <property type="entry name" value="D-aminoacyl-tRNA deacylase"/>
    <property type="match status" value="1"/>
</dbReference>
<dbReference type="Gene3D" id="3.50.80.10">
    <property type="entry name" value="D-tyrosyl-tRNA(Tyr) deacylase"/>
    <property type="match status" value="1"/>
</dbReference>
<dbReference type="HAMAP" id="MF_00518">
    <property type="entry name" value="Deacylase_Dtd"/>
    <property type="match status" value="1"/>
</dbReference>
<dbReference type="InterPro" id="IPR003732">
    <property type="entry name" value="Daa-tRNA_deacyls_DTD"/>
</dbReference>
<dbReference type="InterPro" id="IPR023509">
    <property type="entry name" value="DTD-like_sf"/>
</dbReference>
<dbReference type="NCBIfam" id="TIGR00256">
    <property type="entry name" value="D-aminoacyl-tRNA deacylase"/>
    <property type="match status" value="1"/>
</dbReference>
<dbReference type="PANTHER" id="PTHR10472:SF5">
    <property type="entry name" value="D-AMINOACYL-TRNA DEACYLASE 1"/>
    <property type="match status" value="1"/>
</dbReference>
<dbReference type="PANTHER" id="PTHR10472">
    <property type="entry name" value="D-TYROSYL-TRNA TYR DEACYLASE"/>
    <property type="match status" value="1"/>
</dbReference>
<dbReference type="Pfam" id="PF02580">
    <property type="entry name" value="Tyr_Deacylase"/>
    <property type="match status" value="1"/>
</dbReference>
<dbReference type="SUPFAM" id="SSF69500">
    <property type="entry name" value="DTD-like"/>
    <property type="match status" value="1"/>
</dbReference>
<protein>
    <recommendedName>
        <fullName evidence="1">D-aminoacyl-tRNA deacylase</fullName>
        <shortName evidence="1">DTD</shortName>
        <ecNumber evidence="1">3.1.1.96</ecNumber>
    </recommendedName>
    <alternativeName>
        <fullName evidence="1">Gly-tRNA(Ala) deacylase</fullName>
    </alternativeName>
</protein>
<name>DTD_ESCF3</name>
<sequence>MIALIQRVTRASVTVEGEVTGEIGAGLLVLLGVEKDDDEQKANRLCERVLGYRIFSDAEGKMNLNVQQAGGSVLVVSQFTLAADTERGMRPSFSKGASPDRAEALYDYFVERCRQQEMNTQTGRFAADMQVSLVNDGPVTFWLQV</sequence>
<accession>B7LVG2</accession>
<reference key="1">
    <citation type="journal article" date="2009" name="PLoS Genet.">
        <title>Organised genome dynamics in the Escherichia coli species results in highly diverse adaptive paths.</title>
        <authorList>
            <person name="Touchon M."/>
            <person name="Hoede C."/>
            <person name="Tenaillon O."/>
            <person name="Barbe V."/>
            <person name="Baeriswyl S."/>
            <person name="Bidet P."/>
            <person name="Bingen E."/>
            <person name="Bonacorsi S."/>
            <person name="Bouchier C."/>
            <person name="Bouvet O."/>
            <person name="Calteau A."/>
            <person name="Chiapello H."/>
            <person name="Clermont O."/>
            <person name="Cruveiller S."/>
            <person name="Danchin A."/>
            <person name="Diard M."/>
            <person name="Dossat C."/>
            <person name="Karoui M.E."/>
            <person name="Frapy E."/>
            <person name="Garry L."/>
            <person name="Ghigo J.M."/>
            <person name="Gilles A.M."/>
            <person name="Johnson J."/>
            <person name="Le Bouguenec C."/>
            <person name="Lescat M."/>
            <person name="Mangenot S."/>
            <person name="Martinez-Jehanne V."/>
            <person name="Matic I."/>
            <person name="Nassif X."/>
            <person name="Oztas S."/>
            <person name="Petit M.A."/>
            <person name="Pichon C."/>
            <person name="Rouy Z."/>
            <person name="Ruf C.S."/>
            <person name="Schneider D."/>
            <person name="Tourret J."/>
            <person name="Vacherie B."/>
            <person name="Vallenet D."/>
            <person name="Medigue C."/>
            <person name="Rocha E.P.C."/>
            <person name="Denamur E."/>
        </authorList>
    </citation>
    <scope>NUCLEOTIDE SEQUENCE [LARGE SCALE GENOMIC DNA]</scope>
    <source>
        <strain>ATCC 35469 / DSM 13698 / BCRC 15582 / CCUG 18766 / IAM 14443 / JCM 21226 / LMG 7866 / NBRC 102419 / NCTC 12128 / CDC 0568-73</strain>
    </source>
</reference>
<keyword id="KW-0963">Cytoplasm</keyword>
<keyword id="KW-0378">Hydrolase</keyword>
<keyword id="KW-0694">RNA-binding</keyword>
<keyword id="KW-0820">tRNA-binding</keyword>
<organism>
    <name type="scientific">Escherichia fergusonii (strain ATCC 35469 / DSM 13698 / CCUG 18766 / IAM 14443 / JCM 21226 / LMG 7866 / NBRC 102419 / NCTC 12128 / CDC 0568-73)</name>
    <dbReference type="NCBI Taxonomy" id="585054"/>
    <lineage>
        <taxon>Bacteria</taxon>
        <taxon>Pseudomonadati</taxon>
        <taxon>Pseudomonadota</taxon>
        <taxon>Gammaproteobacteria</taxon>
        <taxon>Enterobacterales</taxon>
        <taxon>Enterobacteriaceae</taxon>
        <taxon>Escherichia</taxon>
    </lineage>
</organism>
<feature type="chain" id="PRO_1000127532" description="D-aminoacyl-tRNA deacylase">
    <location>
        <begin position="1"/>
        <end position="145"/>
    </location>
</feature>
<feature type="short sequence motif" description="Gly-cisPro motif, important for rejection of L-amino acids" evidence="1">
    <location>
        <begin position="137"/>
        <end position="138"/>
    </location>
</feature>